<name>FBK81_ARATH</name>
<dbReference type="EMBL" id="AL049500">
    <property type="protein sequence ID" value="CAB39948.1"/>
    <property type="molecule type" value="Genomic_DNA"/>
</dbReference>
<dbReference type="EMBL" id="AL161532">
    <property type="protein sequence ID" value="CAB78220.1"/>
    <property type="molecule type" value="Genomic_DNA"/>
</dbReference>
<dbReference type="EMBL" id="CP002687">
    <property type="protein sequence ID" value="AEE83047.1"/>
    <property type="molecule type" value="Genomic_DNA"/>
</dbReference>
<dbReference type="PIR" id="T04224">
    <property type="entry name" value="T04224"/>
</dbReference>
<dbReference type="RefSeq" id="NP_192914.1">
    <property type="nucleotide sequence ID" value="NM_117246.1"/>
</dbReference>
<dbReference type="SMR" id="Q9T0E4"/>
<dbReference type="FunCoup" id="Q9T0E4">
    <property type="interactions" value="1"/>
</dbReference>
<dbReference type="PaxDb" id="3702-AT4G11770.1"/>
<dbReference type="EnsemblPlants" id="AT4G11770.1">
    <property type="protein sequence ID" value="AT4G11770.1"/>
    <property type="gene ID" value="AT4G11770"/>
</dbReference>
<dbReference type="GeneID" id="826783"/>
<dbReference type="Gramene" id="AT4G11770.1">
    <property type="protein sequence ID" value="AT4G11770.1"/>
    <property type="gene ID" value="AT4G11770"/>
</dbReference>
<dbReference type="KEGG" id="ath:AT4G11770"/>
<dbReference type="Araport" id="AT4G11770"/>
<dbReference type="TAIR" id="AT4G11770"/>
<dbReference type="eggNOG" id="KOG1072">
    <property type="taxonomic scope" value="Eukaryota"/>
</dbReference>
<dbReference type="HOGENOM" id="CLU_032521_1_2_1"/>
<dbReference type="InParanoid" id="Q9T0E4"/>
<dbReference type="OMA" id="IYGKVEW"/>
<dbReference type="PhylomeDB" id="Q9T0E4"/>
<dbReference type="PRO" id="PR:Q9T0E4"/>
<dbReference type="Proteomes" id="UP000006548">
    <property type="component" value="Chromosome 4"/>
</dbReference>
<dbReference type="ExpressionAtlas" id="Q9T0E4">
    <property type="expression patterns" value="differential"/>
</dbReference>
<dbReference type="CDD" id="cd22152">
    <property type="entry name" value="F-box_AtAFR-like"/>
    <property type="match status" value="1"/>
</dbReference>
<dbReference type="Gene3D" id="2.120.10.80">
    <property type="entry name" value="Kelch-type beta propeller"/>
    <property type="match status" value="1"/>
</dbReference>
<dbReference type="InterPro" id="IPR036047">
    <property type="entry name" value="F-box-like_dom_sf"/>
</dbReference>
<dbReference type="InterPro" id="IPR050354">
    <property type="entry name" value="F-box/kelch-repeat_ARATH"/>
</dbReference>
<dbReference type="InterPro" id="IPR001810">
    <property type="entry name" value="F-box_dom"/>
</dbReference>
<dbReference type="InterPro" id="IPR015915">
    <property type="entry name" value="Kelch-typ_b-propeller"/>
</dbReference>
<dbReference type="InterPro" id="IPR006652">
    <property type="entry name" value="Kelch_1"/>
</dbReference>
<dbReference type="PANTHER" id="PTHR24414">
    <property type="entry name" value="F-BOX/KELCH-REPEAT PROTEIN SKIP4"/>
    <property type="match status" value="1"/>
</dbReference>
<dbReference type="PANTHER" id="PTHR24414:SF82">
    <property type="entry name" value="GALACTOSE OXIDASE_KELCH REPEAT SUPERFAMILY PROTEIN"/>
    <property type="match status" value="1"/>
</dbReference>
<dbReference type="Pfam" id="PF00646">
    <property type="entry name" value="F-box"/>
    <property type="match status" value="1"/>
</dbReference>
<dbReference type="Pfam" id="PF25210">
    <property type="entry name" value="Kelch_FKB95"/>
    <property type="match status" value="1"/>
</dbReference>
<dbReference type="SMART" id="SM00256">
    <property type="entry name" value="FBOX"/>
    <property type="match status" value="1"/>
</dbReference>
<dbReference type="SMART" id="SM00612">
    <property type="entry name" value="Kelch"/>
    <property type="match status" value="2"/>
</dbReference>
<dbReference type="SUPFAM" id="SSF81383">
    <property type="entry name" value="F-box domain"/>
    <property type="match status" value="1"/>
</dbReference>
<dbReference type="SUPFAM" id="SSF117281">
    <property type="entry name" value="Kelch motif"/>
    <property type="match status" value="1"/>
</dbReference>
<dbReference type="PROSITE" id="PS50181">
    <property type="entry name" value="FBOX"/>
    <property type="match status" value="1"/>
</dbReference>
<organism>
    <name type="scientific">Arabidopsis thaliana</name>
    <name type="common">Mouse-ear cress</name>
    <dbReference type="NCBI Taxonomy" id="3702"/>
    <lineage>
        <taxon>Eukaryota</taxon>
        <taxon>Viridiplantae</taxon>
        <taxon>Streptophyta</taxon>
        <taxon>Embryophyta</taxon>
        <taxon>Tracheophyta</taxon>
        <taxon>Spermatophyta</taxon>
        <taxon>Magnoliopsida</taxon>
        <taxon>eudicotyledons</taxon>
        <taxon>Gunneridae</taxon>
        <taxon>Pentapetalae</taxon>
        <taxon>rosids</taxon>
        <taxon>malvids</taxon>
        <taxon>Brassicales</taxon>
        <taxon>Brassicaceae</taxon>
        <taxon>Camelineae</taxon>
        <taxon>Arabidopsis</taxon>
    </lineage>
</organism>
<evidence type="ECO:0000255" key="1">
    <source>
        <dbReference type="PROSITE-ProRule" id="PRU00080"/>
    </source>
</evidence>
<reference key="1">
    <citation type="journal article" date="1999" name="Nature">
        <title>Sequence and analysis of chromosome 4 of the plant Arabidopsis thaliana.</title>
        <authorList>
            <person name="Mayer K.F.X."/>
            <person name="Schueller C."/>
            <person name="Wambutt R."/>
            <person name="Murphy G."/>
            <person name="Volckaert G."/>
            <person name="Pohl T."/>
            <person name="Duesterhoeft A."/>
            <person name="Stiekema W."/>
            <person name="Entian K.-D."/>
            <person name="Terryn N."/>
            <person name="Harris B."/>
            <person name="Ansorge W."/>
            <person name="Brandt P."/>
            <person name="Grivell L.A."/>
            <person name="Rieger M."/>
            <person name="Weichselgartner M."/>
            <person name="de Simone V."/>
            <person name="Obermaier B."/>
            <person name="Mache R."/>
            <person name="Mueller M."/>
            <person name="Kreis M."/>
            <person name="Delseny M."/>
            <person name="Puigdomenech P."/>
            <person name="Watson M."/>
            <person name="Schmidtheini T."/>
            <person name="Reichert B."/>
            <person name="Portetelle D."/>
            <person name="Perez-Alonso M."/>
            <person name="Boutry M."/>
            <person name="Bancroft I."/>
            <person name="Vos P."/>
            <person name="Hoheisel J."/>
            <person name="Zimmermann W."/>
            <person name="Wedler H."/>
            <person name="Ridley P."/>
            <person name="Langham S.-A."/>
            <person name="McCullagh B."/>
            <person name="Bilham L."/>
            <person name="Robben J."/>
            <person name="van der Schueren J."/>
            <person name="Grymonprez B."/>
            <person name="Chuang Y.-J."/>
            <person name="Vandenbussche F."/>
            <person name="Braeken M."/>
            <person name="Weltjens I."/>
            <person name="Voet M."/>
            <person name="Bastiaens I."/>
            <person name="Aert R."/>
            <person name="Defoor E."/>
            <person name="Weitzenegger T."/>
            <person name="Bothe G."/>
            <person name="Ramsperger U."/>
            <person name="Hilbert H."/>
            <person name="Braun M."/>
            <person name="Holzer E."/>
            <person name="Brandt A."/>
            <person name="Peters S."/>
            <person name="van Staveren M."/>
            <person name="Dirkse W."/>
            <person name="Mooijman P."/>
            <person name="Klein Lankhorst R."/>
            <person name="Rose M."/>
            <person name="Hauf J."/>
            <person name="Koetter P."/>
            <person name="Berneiser S."/>
            <person name="Hempel S."/>
            <person name="Feldpausch M."/>
            <person name="Lamberth S."/>
            <person name="Van den Daele H."/>
            <person name="De Keyser A."/>
            <person name="Buysshaert C."/>
            <person name="Gielen J."/>
            <person name="Villarroel R."/>
            <person name="De Clercq R."/>
            <person name="van Montagu M."/>
            <person name="Rogers J."/>
            <person name="Cronin A."/>
            <person name="Quail M.A."/>
            <person name="Bray-Allen S."/>
            <person name="Clark L."/>
            <person name="Doggett J."/>
            <person name="Hall S."/>
            <person name="Kay M."/>
            <person name="Lennard N."/>
            <person name="McLay K."/>
            <person name="Mayes R."/>
            <person name="Pettett A."/>
            <person name="Rajandream M.A."/>
            <person name="Lyne M."/>
            <person name="Benes V."/>
            <person name="Rechmann S."/>
            <person name="Borkova D."/>
            <person name="Bloecker H."/>
            <person name="Scharfe M."/>
            <person name="Grimm M."/>
            <person name="Loehnert T.-H."/>
            <person name="Dose S."/>
            <person name="de Haan M."/>
            <person name="Maarse A.C."/>
            <person name="Schaefer M."/>
            <person name="Mueller-Auer S."/>
            <person name="Gabel C."/>
            <person name="Fuchs M."/>
            <person name="Fartmann B."/>
            <person name="Granderath K."/>
            <person name="Dauner D."/>
            <person name="Herzl A."/>
            <person name="Neumann S."/>
            <person name="Argiriou A."/>
            <person name="Vitale D."/>
            <person name="Liguori R."/>
            <person name="Piravandi E."/>
            <person name="Massenet O."/>
            <person name="Quigley F."/>
            <person name="Clabauld G."/>
            <person name="Muendlein A."/>
            <person name="Felber R."/>
            <person name="Schnabl S."/>
            <person name="Hiller R."/>
            <person name="Schmidt W."/>
            <person name="Lecharny A."/>
            <person name="Aubourg S."/>
            <person name="Chefdor F."/>
            <person name="Cooke R."/>
            <person name="Berger C."/>
            <person name="Monfort A."/>
            <person name="Casacuberta E."/>
            <person name="Gibbons T."/>
            <person name="Weber N."/>
            <person name="Vandenbol M."/>
            <person name="Bargues M."/>
            <person name="Terol J."/>
            <person name="Torres A."/>
            <person name="Perez-Perez A."/>
            <person name="Purnelle B."/>
            <person name="Bent E."/>
            <person name="Johnson S."/>
            <person name="Tacon D."/>
            <person name="Jesse T."/>
            <person name="Heijnen L."/>
            <person name="Schwarz S."/>
            <person name="Scholler P."/>
            <person name="Heber S."/>
            <person name="Francs P."/>
            <person name="Bielke C."/>
            <person name="Frishman D."/>
            <person name="Haase D."/>
            <person name="Lemcke K."/>
            <person name="Mewes H.-W."/>
            <person name="Stocker S."/>
            <person name="Zaccaria P."/>
            <person name="Bevan M."/>
            <person name="Wilson R.K."/>
            <person name="de la Bastide M."/>
            <person name="Habermann K."/>
            <person name="Parnell L."/>
            <person name="Dedhia N."/>
            <person name="Gnoj L."/>
            <person name="Schutz K."/>
            <person name="Huang E."/>
            <person name="Spiegel L."/>
            <person name="Sekhon M."/>
            <person name="Murray J."/>
            <person name="Sheet P."/>
            <person name="Cordes M."/>
            <person name="Abu-Threideh J."/>
            <person name="Stoneking T."/>
            <person name="Kalicki J."/>
            <person name="Graves T."/>
            <person name="Harmon G."/>
            <person name="Edwards J."/>
            <person name="Latreille P."/>
            <person name="Courtney L."/>
            <person name="Cloud J."/>
            <person name="Abbott A."/>
            <person name="Scott K."/>
            <person name="Johnson D."/>
            <person name="Minx P."/>
            <person name="Bentley D."/>
            <person name="Fulton B."/>
            <person name="Miller N."/>
            <person name="Greco T."/>
            <person name="Kemp K."/>
            <person name="Kramer J."/>
            <person name="Fulton L."/>
            <person name="Mardis E."/>
            <person name="Dante M."/>
            <person name="Pepin K."/>
            <person name="Hillier L.W."/>
            <person name="Nelson J."/>
            <person name="Spieth J."/>
            <person name="Ryan E."/>
            <person name="Andrews S."/>
            <person name="Geisel C."/>
            <person name="Layman D."/>
            <person name="Du H."/>
            <person name="Ali J."/>
            <person name="Berghoff A."/>
            <person name="Jones K."/>
            <person name="Drone K."/>
            <person name="Cotton M."/>
            <person name="Joshu C."/>
            <person name="Antonoiu B."/>
            <person name="Zidanic M."/>
            <person name="Strong C."/>
            <person name="Sun H."/>
            <person name="Lamar B."/>
            <person name="Yordan C."/>
            <person name="Ma P."/>
            <person name="Zhong J."/>
            <person name="Preston R."/>
            <person name="Vil D."/>
            <person name="Shekher M."/>
            <person name="Matero A."/>
            <person name="Shah R."/>
            <person name="Swaby I.K."/>
            <person name="O'Shaughnessy A."/>
            <person name="Rodriguez M."/>
            <person name="Hoffman J."/>
            <person name="Till S."/>
            <person name="Granat S."/>
            <person name="Shohdy N."/>
            <person name="Hasegawa A."/>
            <person name="Hameed A."/>
            <person name="Lodhi M."/>
            <person name="Johnson A."/>
            <person name="Chen E."/>
            <person name="Marra M.A."/>
            <person name="Martienssen R."/>
            <person name="McCombie W.R."/>
        </authorList>
    </citation>
    <scope>NUCLEOTIDE SEQUENCE [LARGE SCALE GENOMIC DNA]</scope>
    <source>
        <strain>cv. Columbia</strain>
    </source>
</reference>
<reference key="2">
    <citation type="journal article" date="2017" name="Plant J.">
        <title>Araport11: a complete reannotation of the Arabidopsis thaliana reference genome.</title>
        <authorList>
            <person name="Cheng C.Y."/>
            <person name="Krishnakumar V."/>
            <person name="Chan A.P."/>
            <person name="Thibaud-Nissen F."/>
            <person name="Schobel S."/>
            <person name="Town C.D."/>
        </authorList>
    </citation>
    <scope>GENOME REANNOTATION</scope>
    <source>
        <strain>cv. Columbia</strain>
    </source>
</reference>
<feature type="chain" id="PRO_0000283241" description="Putative F-box/kelch-repeat protein At4g11770">
    <location>
        <begin position="1"/>
        <end position="396"/>
    </location>
</feature>
<feature type="domain" description="F-box" evidence="1">
    <location>
        <begin position="9"/>
        <end position="55"/>
    </location>
</feature>
<feature type="repeat" description="Kelch 1">
    <location>
        <begin position="151"/>
        <end position="197"/>
    </location>
</feature>
<feature type="repeat" description="Kelch 2">
    <location>
        <begin position="198"/>
        <end position="248"/>
    </location>
</feature>
<feature type="repeat" description="Kelch 3">
    <location>
        <begin position="250"/>
        <end position="296"/>
    </location>
</feature>
<sequence>MMNGIKSSPCNMPYLPDDLLLNILGRVSRLYYPILSLVSKRFRSLVGSLELYKIRTLLGRRTENCLYLSLRFSYGSNPRWFTLCRRPTRTPSPEPNLKSRWFTSCFRPILTNLTRATSKEEKKLSENLMVSIPTSNDCPLSGLTCNTIGSYIYMIGGYINGVLSSRVFFLDCRSHTWHEAPSMQVARKSPLVNVLDGKIYVVEGWRGSDYSNLIEIFDPKTQKWEHVPSPSAEMRGRYISKGLVYEEKLYLFGDKNVVYKPKESRWDALGFDMNLWLVSYGSSCVIDNVCYMVFYKRLIWYDSEVRYWRVLKGLEKLPKLRHRRSCIRMVDYGGKIAILWEKKVRVVGSDKKMIWCTEIALERRSAHKIYGKIEWCDVVLTVPKSCSLLEFIAVTI</sequence>
<gene>
    <name type="ordered locus">At4g11770</name>
    <name type="ORF">T5C23.200</name>
</gene>
<proteinExistence type="predicted"/>
<keyword id="KW-0880">Kelch repeat</keyword>
<keyword id="KW-1185">Reference proteome</keyword>
<keyword id="KW-0677">Repeat</keyword>
<protein>
    <recommendedName>
        <fullName>Putative F-box/kelch-repeat protein At4g11770</fullName>
    </recommendedName>
</protein>
<accession>Q9T0E4</accession>